<comment type="function">
    <text evidence="1 7">CIPK serine-threonine protein kinases interact with CBL proteins. Binding of a CBL protein to the regulatory NAF domain of CIPK protein lead to the activation of the kinase in a calcium-dependent manner (By similarity). Required for the abscisic acid-mediated (ABA) signaling pathway involved in seed germination and growth elongation inhibition.</text>
</comment>
<comment type="catalytic activity">
    <reaction>
        <text>L-seryl-[protein] + ATP = O-phospho-L-seryl-[protein] + ADP + H(+)</text>
        <dbReference type="Rhea" id="RHEA:17989"/>
        <dbReference type="Rhea" id="RHEA-COMP:9863"/>
        <dbReference type="Rhea" id="RHEA-COMP:11604"/>
        <dbReference type="ChEBI" id="CHEBI:15378"/>
        <dbReference type="ChEBI" id="CHEBI:29999"/>
        <dbReference type="ChEBI" id="CHEBI:30616"/>
        <dbReference type="ChEBI" id="CHEBI:83421"/>
        <dbReference type="ChEBI" id="CHEBI:456216"/>
        <dbReference type="EC" id="2.7.11.1"/>
    </reaction>
</comment>
<comment type="catalytic activity">
    <reaction>
        <text>L-threonyl-[protein] + ATP = O-phospho-L-threonyl-[protein] + ADP + H(+)</text>
        <dbReference type="Rhea" id="RHEA:46608"/>
        <dbReference type="Rhea" id="RHEA-COMP:11060"/>
        <dbReference type="Rhea" id="RHEA-COMP:11605"/>
        <dbReference type="ChEBI" id="CHEBI:15378"/>
        <dbReference type="ChEBI" id="CHEBI:30013"/>
        <dbReference type="ChEBI" id="CHEBI:30616"/>
        <dbReference type="ChEBI" id="CHEBI:61977"/>
        <dbReference type="ChEBI" id="CHEBI:456216"/>
        <dbReference type="EC" id="2.7.11.1"/>
    </reaction>
</comment>
<comment type="cofactor">
    <cofactor evidence="1">
        <name>Mn(2+)</name>
        <dbReference type="ChEBI" id="CHEBI:29035"/>
    </cofactor>
</comment>
<comment type="interaction">
    <interactant intactId="EBI-25514480">
        <id>Q9FJ54</id>
    </interactant>
    <interactant intactId="EBI-637381">
        <id>Q9LTB8</id>
        <label>CBL9</label>
    </interactant>
    <organismsDiffer>false</organismsDiffer>
    <experiments>5</experiments>
</comment>
<comment type="tissue specificity">
    <text evidence="7">Confined to mature leaves.</text>
</comment>
<comment type="domain">
    <text evidence="1">The activation loop within the kinase domain is the target of phosphorylation/activation by upstream protein kinases. The PPI motif mediates the interaction with the ABI (abscisic acid-insensitive) phosphatases (By similarity).</text>
</comment>
<comment type="PTM">
    <text>Autophosphorylated.</text>
</comment>
<comment type="similarity">
    <text evidence="8">Belongs to the protein kinase superfamily. CAMK Ser/Thr protein kinase family. SNF1 subfamily.</text>
</comment>
<gene>
    <name type="primary">CIPK20</name>
    <name type="synonym">PKS18</name>
    <name type="synonym">SnRK3.6</name>
    <name type="ordered locus">At5g45820</name>
    <name type="ORF">K15I22.2</name>
</gene>
<feature type="chain" id="PRO_0000337221" description="CBL-interacting serine/threonine-protein kinase 20">
    <location>
        <begin position="1"/>
        <end position="439"/>
    </location>
</feature>
<feature type="domain" description="Protein kinase" evidence="4">
    <location>
        <begin position="12"/>
        <end position="266"/>
    </location>
</feature>
<feature type="domain" description="NAF" evidence="5">
    <location>
        <begin position="297"/>
        <end position="322"/>
    </location>
</feature>
<feature type="region of interest" description="Activation loop" evidence="1">
    <location>
        <begin position="152"/>
        <end position="181"/>
    </location>
</feature>
<feature type="region of interest" description="PPI" evidence="1">
    <location>
        <begin position="326"/>
        <end position="356"/>
    </location>
</feature>
<feature type="active site" description="Proton acceptor" evidence="4 6">
    <location>
        <position position="134"/>
    </location>
</feature>
<feature type="binding site" evidence="4">
    <location>
        <begin position="18"/>
        <end position="26"/>
    </location>
    <ligand>
        <name>ATP</name>
        <dbReference type="ChEBI" id="CHEBI:30616"/>
    </ligand>
</feature>
<feature type="binding site" evidence="4">
    <location>
        <position position="41"/>
    </location>
    <ligand>
        <name>ATP</name>
        <dbReference type="ChEBI" id="CHEBI:30616"/>
    </ligand>
</feature>
<feature type="modified residue" description="Phosphoserine" evidence="3">
    <location>
        <position position="156"/>
    </location>
</feature>
<feature type="modified residue" description="Phosphothreonine" evidence="2">
    <location>
        <position position="170"/>
    </location>
</feature>
<feature type="mutagenesis site" description="Strongly enhanced kinase activity, and higher autophosphorylation, with an optimal pH of 7.5." evidence="7">
    <original>T</original>
    <variation>D</variation>
    <location>
        <position position="170"/>
    </location>
</feature>
<feature type="mutagenesis site" description="Enhanced kinase activity, and higher autophosphorylation.">
    <location>
        <begin position="303"/>
        <end position="323"/>
    </location>
</feature>
<reference key="1">
    <citation type="submission" date="2001-05" db="EMBL/GenBank/DDBJ databases">
        <title>Molecular characterization of the CIPK gene family from Arabidopsis thaliana.</title>
        <authorList>
            <person name="Weinl S."/>
            <person name="Albrecht V."/>
            <person name="Kudla J."/>
        </authorList>
    </citation>
    <scope>NUCLEOTIDE SEQUENCE [MRNA]</scope>
</reference>
<reference key="2">
    <citation type="journal article" date="1998" name="DNA Res.">
        <title>Structural analysis of Arabidopsis thaliana chromosome 5. VIII. Sequence features of the regions of 1,081,958 bp covered by seventeen physically assigned P1 and TAC clones.</title>
        <authorList>
            <person name="Asamizu E."/>
            <person name="Sato S."/>
            <person name="Kaneko T."/>
            <person name="Nakamura Y."/>
            <person name="Kotani H."/>
            <person name="Miyajima N."/>
            <person name="Tabata S."/>
        </authorList>
    </citation>
    <scope>NUCLEOTIDE SEQUENCE [LARGE SCALE GENOMIC DNA]</scope>
    <source>
        <strain>cv. Columbia</strain>
    </source>
</reference>
<reference key="3">
    <citation type="journal article" date="2017" name="Plant J.">
        <title>Araport11: a complete reannotation of the Arabidopsis thaliana reference genome.</title>
        <authorList>
            <person name="Cheng C.Y."/>
            <person name="Krishnakumar V."/>
            <person name="Chan A.P."/>
            <person name="Thibaud-Nissen F."/>
            <person name="Schobel S."/>
            <person name="Town C.D."/>
        </authorList>
    </citation>
    <scope>GENOME REANNOTATION</scope>
    <source>
        <strain>cv. Columbia</strain>
    </source>
</reference>
<reference key="4">
    <citation type="submission" date="2005-03" db="EMBL/GenBank/DDBJ databases">
        <title>Large-scale analysis of RIKEN Arabidopsis full-length (RAFL) cDNAs.</title>
        <authorList>
            <person name="Totoki Y."/>
            <person name="Seki M."/>
            <person name="Ishida J."/>
            <person name="Nakajima M."/>
            <person name="Enju A."/>
            <person name="Kamiya A."/>
            <person name="Narusaka M."/>
            <person name="Shin-i T."/>
            <person name="Nakagawa M."/>
            <person name="Sakamoto N."/>
            <person name="Oishi K."/>
            <person name="Kohara Y."/>
            <person name="Kobayashi M."/>
            <person name="Toyoda A."/>
            <person name="Sakaki Y."/>
            <person name="Sakurai T."/>
            <person name="Iida K."/>
            <person name="Akiyama K."/>
            <person name="Satou M."/>
            <person name="Toyoda T."/>
            <person name="Konagaya A."/>
            <person name="Carninci P."/>
            <person name="Kawai J."/>
            <person name="Hayashizaki Y."/>
            <person name="Shinozaki K."/>
        </authorList>
    </citation>
    <scope>NUCLEOTIDE SEQUENCE [LARGE SCALE MRNA]</scope>
    <source>
        <strain>cv. Columbia</strain>
    </source>
</reference>
<reference key="5">
    <citation type="submission" date="2006-09" db="EMBL/GenBank/DDBJ databases">
        <title>Arabidopsis ORF clones.</title>
        <authorList>
            <person name="Bautista V.R."/>
            <person name="Kim C.J."/>
            <person name="Chen H."/>
            <person name="Quinitio C."/>
            <person name="Ecker J.R."/>
        </authorList>
    </citation>
    <scope>NUCLEOTIDE SEQUENCE [LARGE SCALE MRNA]</scope>
    <source>
        <strain>cv. Columbia</strain>
    </source>
</reference>
<reference key="6">
    <citation type="journal article" date="2002" name="J. Biol. Chem.">
        <title>Constitutive activation and transgenic evaluation of the function of an arabidopsis PKS protein kinase.</title>
        <authorList>
            <person name="Gong D."/>
            <person name="Zhang C."/>
            <person name="Chen X."/>
            <person name="Gong Z."/>
            <person name="Zhu J.-K."/>
        </authorList>
    </citation>
    <scope>FUNCTION</scope>
    <scope>MUTAGENESIS OF THR-170</scope>
    <scope>AUTOPHOSPHORYLATION</scope>
    <scope>TISSUE SPECIFICITY</scope>
</reference>
<reference key="7">
    <citation type="journal article" date="2003" name="Plant Physiol.">
        <title>The Arabidopsis CDPK-SnRK superfamily of protein kinases.</title>
        <authorList>
            <person name="Hrabak E.M."/>
            <person name="Chan C.W.M."/>
            <person name="Gribskov M."/>
            <person name="Harper J.F."/>
            <person name="Choi J.H."/>
            <person name="Halford N."/>
            <person name="Kudla J."/>
            <person name="Luan S."/>
            <person name="Nimmo H.G."/>
            <person name="Sussman M.R."/>
            <person name="Thomas M."/>
            <person name="Walker-Simmons K."/>
            <person name="Zhu J.-K."/>
            <person name="Harmon A.C."/>
        </authorList>
    </citation>
    <scope>GENE FAMILY</scope>
    <scope>NOMENCLATURE</scope>
</reference>
<protein>
    <recommendedName>
        <fullName>CBL-interacting serine/threonine-protein kinase 20</fullName>
        <ecNumber>2.7.11.1</ecNumber>
    </recommendedName>
    <alternativeName>
        <fullName>SNF1-related kinase 3.6</fullName>
    </alternativeName>
    <alternativeName>
        <fullName>SOS2-like protein kinase PKS18</fullName>
    </alternativeName>
</protein>
<dbReference type="EC" id="2.7.11.1"/>
<dbReference type="EMBL" id="AY035225">
    <property type="protein sequence ID" value="AAK61493.1"/>
    <property type="molecule type" value="mRNA"/>
</dbReference>
<dbReference type="EMBL" id="AB016870">
    <property type="protein sequence ID" value="BAB09310.1"/>
    <property type="molecule type" value="Genomic_DNA"/>
</dbReference>
<dbReference type="EMBL" id="CP002688">
    <property type="protein sequence ID" value="AED95303.1"/>
    <property type="molecule type" value="Genomic_DNA"/>
</dbReference>
<dbReference type="EMBL" id="AK221510">
    <property type="protein sequence ID" value="BAD94760.1"/>
    <property type="molecule type" value="mRNA"/>
</dbReference>
<dbReference type="EMBL" id="BT028970">
    <property type="protein sequence ID" value="ABI54345.1"/>
    <property type="molecule type" value="mRNA"/>
</dbReference>
<dbReference type="RefSeq" id="NP_199394.1">
    <property type="nucleotide sequence ID" value="NM_123950.4"/>
</dbReference>
<dbReference type="SMR" id="Q9FJ54"/>
<dbReference type="BioGRID" id="19871">
    <property type="interactions" value="3"/>
</dbReference>
<dbReference type="FunCoup" id="Q9FJ54">
    <property type="interactions" value="971"/>
</dbReference>
<dbReference type="IntAct" id="Q9FJ54">
    <property type="interactions" value="1"/>
</dbReference>
<dbReference type="STRING" id="3702.Q9FJ54"/>
<dbReference type="PaxDb" id="3702-AT5G45820.1"/>
<dbReference type="ProteomicsDB" id="246518"/>
<dbReference type="EnsemblPlants" id="AT5G45820.1">
    <property type="protein sequence ID" value="AT5G45820.1"/>
    <property type="gene ID" value="AT5G45820"/>
</dbReference>
<dbReference type="GeneID" id="834622"/>
<dbReference type="Gramene" id="AT5G45820.1">
    <property type="protein sequence ID" value="AT5G45820.1"/>
    <property type="gene ID" value="AT5G45820"/>
</dbReference>
<dbReference type="KEGG" id="ath:AT5G45820"/>
<dbReference type="Araport" id="AT5G45820"/>
<dbReference type="TAIR" id="AT5G45820">
    <property type="gene designation" value="CIPK20"/>
</dbReference>
<dbReference type="eggNOG" id="KOG0583">
    <property type="taxonomic scope" value="Eukaryota"/>
</dbReference>
<dbReference type="HOGENOM" id="CLU_000288_59_0_1"/>
<dbReference type="InParanoid" id="Q9FJ54"/>
<dbReference type="OMA" id="FEEIAMN"/>
<dbReference type="OrthoDB" id="6496349at2759"/>
<dbReference type="PhylomeDB" id="Q9FJ54"/>
<dbReference type="PRO" id="PR:Q9FJ54"/>
<dbReference type="Proteomes" id="UP000006548">
    <property type="component" value="Chromosome 5"/>
</dbReference>
<dbReference type="ExpressionAtlas" id="Q9FJ54">
    <property type="expression patterns" value="baseline and differential"/>
</dbReference>
<dbReference type="GO" id="GO:0005524">
    <property type="term" value="F:ATP binding"/>
    <property type="evidence" value="ECO:0007669"/>
    <property type="project" value="UniProtKB-KW"/>
</dbReference>
<dbReference type="GO" id="GO:0106310">
    <property type="term" value="F:protein serine kinase activity"/>
    <property type="evidence" value="ECO:0007669"/>
    <property type="project" value="RHEA"/>
</dbReference>
<dbReference type="GO" id="GO:0004674">
    <property type="term" value="F:protein serine/threonine kinase activity"/>
    <property type="evidence" value="ECO:0000304"/>
    <property type="project" value="TAIR"/>
</dbReference>
<dbReference type="GO" id="GO:0009737">
    <property type="term" value="P:response to abscisic acid"/>
    <property type="evidence" value="ECO:0000315"/>
    <property type="project" value="TAIR"/>
</dbReference>
<dbReference type="GO" id="GO:0007165">
    <property type="term" value="P:signal transduction"/>
    <property type="evidence" value="ECO:0007669"/>
    <property type="project" value="InterPro"/>
</dbReference>
<dbReference type="CDD" id="cd12195">
    <property type="entry name" value="CIPK_C"/>
    <property type="match status" value="1"/>
</dbReference>
<dbReference type="CDD" id="cd14663">
    <property type="entry name" value="STKc_SnRK3"/>
    <property type="match status" value="1"/>
</dbReference>
<dbReference type="FunFam" id="1.10.510.10:FF:000653">
    <property type="entry name" value="Non-specific serine/threonine protein kinase"/>
    <property type="match status" value="1"/>
</dbReference>
<dbReference type="FunFam" id="3.30.200.20:FF:000096">
    <property type="entry name" value="Non-specific serine/threonine protein kinase"/>
    <property type="match status" value="1"/>
</dbReference>
<dbReference type="FunFam" id="3.30.310.80:FF:000005">
    <property type="entry name" value="Non-specific serine/threonine protein kinase"/>
    <property type="match status" value="1"/>
</dbReference>
<dbReference type="Gene3D" id="3.30.310.80">
    <property type="entry name" value="Kinase associated domain 1, KA1"/>
    <property type="match status" value="1"/>
</dbReference>
<dbReference type="Gene3D" id="3.30.200.20">
    <property type="entry name" value="Phosphorylase Kinase, domain 1"/>
    <property type="match status" value="1"/>
</dbReference>
<dbReference type="Gene3D" id="1.10.510.10">
    <property type="entry name" value="Transferase(Phosphotransferase) domain 1"/>
    <property type="match status" value="1"/>
</dbReference>
<dbReference type="InterPro" id="IPR011009">
    <property type="entry name" value="Kinase-like_dom_sf"/>
</dbReference>
<dbReference type="InterPro" id="IPR018451">
    <property type="entry name" value="NAF/FISL_domain"/>
</dbReference>
<dbReference type="InterPro" id="IPR004041">
    <property type="entry name" value="NAF_dom"/>
</dbReference>
<dbReference type="InterPro" id="IPR000719">
    <property type="entry name" value="Prot_kinase_dom"/>
</dbReference>
<dbReference type="InterPro" id="IPR017441">
    <property type="entry name" value="Protein_kinase_ATP_BS"/>
</dbReference>
<dbReference type="InterPro" id="IPR008271">
    <property type="entry name" value="Ser/Thr_kinase_AS"/>
</dbReference>
<dbReference type="PANTHER" id="PTHR43895">
    <property type="entry name" value="CALCIUM/CALMODULIN-DEPENDENT PROTEIN KINASE KINASE-RELATED"/>
    <property type="match status" value="1"/>
</dbReference>
<dbReference type="PANTHER" id="PTHR43895:SF3">
    <property type="entry name" value="CBL-INTERACTING SERINE_THREONINE-PROTEIN KINASE 20"/>
    <property type="match status" value="1"/>
</dbReference>
<dbReference type="Pfam" id="PF03822">
    <property type="entry name" value="NAF"/>
    <property type="match status" value="1"/>
</dbReference>
<dbReference type="Pfam" id="PF00069">
    <property type="entry name" value="Pkinase"/>
    <property type="match status" value="1"/>
</dbReference>
<dbReference type="SMART" id="SM00220">
    <property type="entry name" value="S_TKc"/>
    <property type="match status" value="1"/>
</dbReference>
<dbReference type="SUPFAM" id="SSF56112">
    <property type="entry name" value="Protein kinase-like (PK-like)"/>
    <property type="match status" value="1"/>
</dbReference>
<dbReference type="PROSITE" id="PS50816">
    <property type="entry name" value="NAF"/>
    <property type="match status" value="1"/>
</dbReference>
<dbReference type="PROSITE" id="PS00107">
    <property type="entry name" value="PROTEIN_KINASE_ATP"/>
    <property type="match status" value="1"/>
</dbReference>
<dbReference type="PROSITE" id="PS50011">
    <property type="entry name" value="PROTEIN_KINASE_DOM"/>
    <property type="match status" value="1"/>
</dbReference>
<dbReference type="PROSITE" id="PS00108">
    <property type="entry name" value="PROTEIN_KINASE_ST"/>
    <property type="match status" value="1"/>
</dbReference>
<proteinExistence type="evidence at protein level"/>
<accession>Q9FJ54</accession>
<keyword id="KW-0067">ATP-binding</keyword>
<keyword id="KW-0418">Kinase</keyword>
<keyword id="KW-0464">Manganese</keyword>
<keyword id="KW-0547">Nucleotide-binding</keyword>
<keyword id="KW-0597">Phosphoprotein</keyword>
<keyword id="KW-1185">Reference proteome</keyword>
<keyword id="KW-0723">Serine/threonine-protein kinase</keyword>
<keyword id="KW-0808">Transferase</keyword>
<organism>
    <name type="scientific">Arabidopsis thaliana</name>
    <name type="common">Mouse-ear cress</name>
    <dbReference type="NCBI Taxonomy" id="3702"/>
    <lineage>
        <taxon>Eukaryota</taxon>
        <taxon>Viridiplantae</taxon>
        <taxon>Streptophyta</taxon>
        <taxon>Embryophyta</taxon>
        <taxon>Tracheophyta</taxon>
        <taxon>Spermatophyta</taxon>
        <taxon>Magnoliopsida</taxon>
        <taxon>eudicotyledons</taxon>
        <taxon>Gunneridae</taxon>
        <taxon>Pentapetalae</taxon>
        <taxon>rosids</taxon>
        <taxon>malvids</taxon>
        <taxon>Brassicales</taxon>
        <taxon>Brassicaceae</taxon>
        <taxon>Camelineae</taxon>
        <taxon>Arabidopsis</taxon>
    </lineage>
</organism>
<name>CIPKK_ARATH</name>
<evidence type="ECO:0000250" key="1"/>
<evidence type="ECO:0000250" key="2">
    <source>
        <dbReference type="UniProtKB" id="Q38997"/>
    </source>
</evidence>
<evidence type="ECO:0000250" key="3">
    <source>
        <dbReference type="UniProtKB" id="Q93V58"/>
    </source>
</evidence>
<evidence type="ECO:0000255" key="4">
    <source>
        <dbReference type="PROSITE-ProRule" id="PRU00159"/>
    </source>
</evidence>
<evidence type="ECO:0000255" key="5">
    <source>
        <dbReference type="PROSITE-ProRule" id="PRU00256"/>
    </source>
</evidence>
<evidence type="ECO:0000255" key="6">
    <source>
        <dbReference type="PROSITE-ProRule" id="PRU10027"/>
    </source>
</evidence>
<evidence type="ECO:0000269" key="7">
    <source>
    </source>
</evidence>
<evidence type="ECO:0000305" key="8"/>
<sequence>MDKNGIVLMRKYELGRLLGQGTFAKVYHARNIKTGESVAIKVIDKQKVAKVGLIDQIKREISVMRLVRHPHVVFLHEVMASKTKIYFAMEYVKGGELFDKVSKGKLKENIARKYFQQLIGAIDYCHSRGVYHRDLKPENLLLDENGDLKISDFGLSALRESKQQDGLLHTTCGTPAYVAPEVIGKKGYDGAKADVWSCGVVLYVLLAGFLPFHEQNLVEMYRKITKGEFKCPNWFPPEVKKLLSRILDPNPNSRIKIEKIMENSWFQKGFKKIETPKSPESHQIDSLISDVHAAFSVKPMSYNAFDLISSLSQGFDLSGLFEKEERSESKFTTKKDAKEIVSKFEEIATSSERFNLTKSDVGVKMEDKREGRKGHLAIDVEIFEVTNSFHMVEFKKSGGDTMEYKQFCDRELRPSLKDIVWKWQGNNNNSNNEKIEVIH</sequence>